<proteinExistence type="evidence at protein level"/>
<protein>
    <recommendedName>
        <fullName evidence="11">11-beta-hydroxysteroid dehydrogenase B</fullName>
        <ecNumber evidence="7">1.1.1.146</ecNumber>
    </recommendedName>
    <alternativeName>
        <fullName evidence="11">17-beta-hydroxysteroid dehydrogenase B</fullName>
        <ecNumber evidence="7">1.1.1.62</ecNumber>
    </alternativeName>
    <alternativeName>
        <fullName evidence="9">Seed oil body protein 3</fullName>
    </alternativeName>
    <alternativeName>
        <fullName evidence="9 12">Steroleosin-B</fullName>
    </alternativeName>
</protein>
<evidence type="ECO:0000250" key="1">
    <source>
        <dbReference type="UniProtKB" id="P14061"/>
    </source>
</evidence>
<evidence type="ECO:0000250" key="2">
    <source>
        <dbReference type="UniProtKB" id="P28845"/>
    </source>
</evidence>
<evidence type="ECO:0000250" key="3">
    <source>
        <dbReference type="UniProtKB" id="Q93W57"/>
    </source>
</evidence>
<evidence type="ECO:0000255" key="4"/>
<evidence type="ECO:0000255" key="5">
    <source>
        <dbReference type="PROSITE-ProRule" id="PRU10001"/>
    </source>
</evidence>
<evidence type="ECO:0000256" key="6">
    <source>
        <dbReference type="SAM" id="MobiDB-lite"/>
    </source>
</evidence>
<evidence type="ECO:0000269" key="7">
    <source>
    </source>
</evidence>
<evidence type="ECO:0000269" key="8">
    <source>
    </source>
</evidence>
<evidence type="ECO:0000303" key="9">
    <source>
    </source>
</evidence>
<evidence type="ECO:0000303" key="10">
    <source>
    </source>
</evidence>
<evidence type="ECO:0000305" key="11"/>
<evidence type="ECO:0000312" key="12">
    <source>
        <dbReference type="EMBL" id="AAM46847.1"/>
    </source>
</evidence>
<gene>
    <name evidence="9 10" type="primary">SOP3</name>
</gene>
<feature type="chain" id="PRO_0000449959" description="11-beta-hydroxysteroid dehydrogenase B">
    <location>
        <begin position="1"/>
        <end position="362"/>
    </location>
</feature>
<feature type="transmembrane region" description="Helical; Signal-anchor for type II membrane protein" evidence="4">
    <location>
        <begin position="10"/>
        <end position="30"/>
    </location>
</feature>
<feature type="region of interest" description="Disordered" evidence="6">
    <location>
        <begin position="321"/>
        <end position="362"/>
    </location>
</feature>
<feature type="short sequence motif" description="Proline-knob" evidence="3">
    <location>
        <begin position="13"/>
        <end position="26"/>
    </location>
</feature>
<feature type="active site" description="Proton acceptor" evidence="5">
    <location>
        <position position="198"/>
    </location>
</feature>
<feature type="binding site" evidence="1">
    <location>
        <begin position="55"/>
        <end position="81"/>
    </location>
    <ligand>
        <name>NADP(+)</name>
        <dbReference type="ChEBI" id="CHEBI:58349"/>
    </ligand>
</feature>
<feature type="binding site" evidence="1">
    <location>
        <position position="185"/>
    </location>
    <ligand>
        <name>substrate</name>
    </ligand>
</feature>
<feature type="binding site" evidence="2">
    <location>
        <begin position="198"/>
        <end position="202"/>
    </location>
    <ligand>
        <name>NADP(+)</name>
        <dbReference type="ChEBI" id="CHEBI:58349"/>
    </ligand>
</feature>
<feature type="binding site" evidence="1">
    <location>
        <position position="202"/>
    </location>
    <ligand>
        <name>NADP(+)</name>
        <dbReference type="ChEBI" id="CHEBI:58349"/>
    </ligand>
</feature>
<reference evidence="12" key="1">
    <citation type="journal article" date="2004" name="Plant Physiol. Biochem.">
        <title>Two distinct steroleosins are present in seed oil bodies.</title>
        <authorList>
            <person name="Lin L.J."/>
            <person name="Tzen J.T."/>
        </authorList>
    </citation>
    <scope>NUCLEOTIDE SEQUENCE [MRNA]</scope>
    <scope>PROTEIN SEQUENCE OF 1-32 AND 94-104</scope>
    <scope>FUNCTION</scope>
    <scope>CATALYTIC ACTIVITY</scope>
    <scope>SUBCELLULAR LOCATION</scope>
    <scope>TISSUE SPECIFICITY</scope>
    <scope>DEVELOPMENTAL STAGE</scope>
    <source>
        <tissue evidence="9">Seed</tissue>
    </source>
</reference>
<reference key="2">
    <citation type="journal article" date="1998" name="Plant Cell Physiol.">
        <title>Identification of three novel unique proteins in seed oil bodies of sesame.</title>
        <authorList>
            <person name="Chen E.C."/>
            <person name="Tai S.S."/>
            <person name="Peng C.C."/>
            <person name="Tzen J.T."/>
        </authorList>
    </citation>
    <scope>GENE NAME</scope>
    <scope>SUBCELLULAR LOCATION</scope>
    <scope>TISSUE SPECIFICITY</scope>
    <scope>DEVELOPMENTAL STAGE</scope>
</reference>
<keyword id="KW-0903">Direct protein sequencing</keyword>
<keyword id="KW-0551">Lipid droplet</keyword>
<keyword id="KW-0472">Membrane</keyword>
<keyword id="KW-0521">NADP</keyword>
<keyword id="KW-0560">Oxidoreductase</keyword>
<keyword id="KW-1185">Reference proteome</keyword>
<keyword id="KW-0735">Signal-anchor</keyword>
<keyword id="KW-0812">Transmembrane</keyword>
<keyword id="KW-1133">Transmembrane helix</keyword>
<accession>Q8LKV5</accession>
<dbReference type="EC" id="1.1.1.146" evidence="7"/>
<dbReference type="EC" id="1.1.1.62" evidence="7"/>
<dbReference type="EMBL" id="AF498264">
    <property type="protein sequence ID" value="AAM46847.1"/>
    <property type="molecule type" value="mRNA"/>
</dbReference>
<dbReference type="RefSeq" id="NP_001291330.1">
    <property type="nucleotide sequence ID" value="NM_001304401.1"/>
</dbReference>
<dbReference type="SMR" id="Q8LKV5"/>
<dbReference type="FunCoup" id="Q8LKV5">
    <property type="interactions" value="114"/>
</dbReference>
<dbReference type="GeneID" id="105175113"/>
<dbReference type="KEGG" id="sind:105175113"/>
<dbReference type="InParanoid" id="Q8LKV5"/>
<dbReference type="OrthoDB" id="1274115at2759"/>
<dbReference type="Proteomes" id="UP000504604">
    <property type="component" value="Linkage group LG2"/>
</dbReference>
<dbReference type="GO" id="GO:0005829">
    <property type="term" value="C:cytosol"/>
    <property type="evidence" value="ECO:0007669"/>
    <property type="project" value="TreeGrafter"/>
</dbReference>
<dbReference type="GO" id="GO:0005811">
    <property type="term" value="C:lipid droplet"/>
    <property type="evidence" value="ECO:0007669"/>
    <property type="project" value="UniProtKB-SubCell"/>
</dbReference>
<dbReference type="GO" id="GO:0016020">
    <property type="term" value="C:membrane"/>
    <property type="evidence" value="ECO:0007669"/>
    <property type="project" value="UniProtKB-SubCell"/>
</dbReference>
<dbReference type="GO" id="GO:0070524">
    <property type="term" value="F:11-beta-hydroxysteroid dehydrogenase (NADP+) activity"/>
    <property type="evidence" value="ECO:0000314"/>
    <property type="project" value="UniProtKB"/>
</dbReference>
<dbReference type="GO" id="GO:0072582">
    <property type="term" value="F:17-beta-hydroxysteroid dehydrogenase (NADP+) activity"/>
    <property type="evidence" value="ECO:0000314"/>
    <property type="project" value="UniProtKB"/>
</dbReference>
<dbReference type="GO" id="GO:0004303">
    <property type="term" value="F:estradiol 17-beta-dehydrogenase [NAD(P)+] activity"/>
    <property type="evidence" value="ECO:0000314"/>
    <property type="project" value="UniProtKB"/>
</dbReference>
<dbReference type="Gene3D" id="3.40.50.720">
    <property type="entry name" value="NAD(P)-binding Rossmann-like Domain"/>
    <property type="match status" value="1"/>
</dbReference>
<dbReference type="InterPro" id="IPR036291">
    <property type="entry name" value="NAD(P)-bd_dom_sf"/>
</dbReference>
<dbReference type="InterPro" id="IPR020904">
    <property type="entry name" value="Sc_DH/Rdtase_CS"/>
</dbReference>
<dbReference type="InterPro" id="IPR002347">
    <property type="entry name" value="SDR_fam"/>
</dbReference>
<dbReference type="PANTHER" id="PTHR43391:SF14">
    <property type="entry name" value="DEHYDROGENASE_REDUCTASE SDR FAMILY PROTEIN 7-LIKE"/>
    <property type="match status" value="1"/>
</dbReference>
<dbReference type="PANTHER" id="PTHR43391">
    <property type="entry name" value="RETINOL DEHYDROGENASE-RELATED"/>
    <property type="match status" value="1"/>
</dbReference>
<dbReference type="Pfam" id="PF00106">
    <property type="entry name" value="adh_short"/>
    <property type="match status" value="1"/>
</dbReference>
<dbReference type="PRINTS" id="PR00081">
    <property type="entry name" value="GDHRDH"/>
</dbReference>
<dbReference type="SUPFAM" id="SSF51735">
    <property type="entry name" value="NAD(P)-binding Rossmann-fold domains"/>
    <property type="match status" value="1"/>
</dbReference>
<dbReference type="PROSITE" id="PS00061">
    <property type="entry name" value="ADH_SHORT"/>
    <property type="match status" value="1"/>
</dbReference>
<sequence>MDLINSLLNFVVPPASLLMLAFTWPTLFFITTCEWLYNTYLNSENMENKVVLITGASSGIGEQIAYQYAKRGANLVLVARREHRLRGISENARRLGAPNVLIMAADVVKEEECRRFINETINYYGRVDHLVNTVSLGHTFYFEEASDSSVFPILMDINFWGNVYPTYVALPYLRESNGRIIVNASVENWLPLPRMSLYSAAKSALINFYETLRFEVKNEVGITVATHGWIGTEMTRGKFMVEEGAEMQWKEEREVHVTGGPVEEFAKQIVSGACRGDPYVKYPSWYDIFFLYRVFAPKVLDWTFRFLLTNGGARRTSFIGTGRPLLETSSPRRSAVMEGSSPRRLPPGPLTFSPAFQQQKSE</sequence>
<name>HSDB_SESIN</name>
<organism evidence="12">
    <name type="scientific">Sesamum indicum</name>
    <name type="common">Oriental sesame</name>
    <name type="synonym">Sesamum orientale</name>
    <dbReference type="NCBI Taxonomy" id="4182"/>
    <lineage>
        <taxon>Eukaryota</taxon>
        <taxon>Viridiplantae</taxon>
        <taxon>Streptophyta</taxon>
        <taxon>Embryophyta</taxon>
        <taxon>Tracheophyta</taxon>
        <taxon>Spermatophyta</taxon>
        <taxon>Magnoliopsida</taxon>
        <taxon>eudicotyledons</taxon>
        <taxon>Gunneridae</taxon>
        <taxon>Pentapetalae</taxon>
        <taxon>asterids</taxon>
        <taxon>lamiids</taxon>
        <taxon>Lamiales</taxon>
        <taxon>Pedaliaceae</taxon>
        <taxon>Sesamum</taxon>
    </lineage>
</organism>
<comment type="function">
    <text evidence="7">Has dehydrogenase activity against corticosterone (11 beta-hydroxysteroid) and estradiol (17 beta-hydroxysteroid), with similar activities to both sterols in the presence of NADP(+), but negligible activity to either sterol in the presence of NAD(+). May be involved in signal transduction regulated by various sterols.</text>
</comment>
<comment type="catalytic activity">
    <reaction evidence="7">
        <text>an 11beta-hydroxysteroid + NADP(+) = an 11-oxosteroid + NADPH + H(+)</text>
        <dbReference type="Rhea" id="RHEA:11388"/>
        <dbReference type="ChEBI" id="CHEBI:15378"/>
        <dbReference type="ChEBI" id="CHEBI:35346"/>
        <dbReference type="ChEBI" id="CHEBI:47787"/>
        <dbReference type="ChEBI" id="CHEBI:57783"/>
        <dbReference type="ChEBI" id="CHEBI:58349"/>
        <dbReference type="EC" id="1.1.1.146"/>
    </reaction>
</comment>
<comment type="catalytic activity">
    <reaction evidence="7">
        <text>corticosterone + NADP(+) = 11-dehydrocorticosterone + NADPH + H(+)</text>
        <dbReference type="Rhea" id="RHEA:42200"/>
        <dbReference type="ChEBI" id="CHEBI:15378"/>
        <dbReference type="ChEBI" id="CHEBI:16827"/>
        <dbReference type="ChEBI" id="CHEBI:57783"/>
        <dbReference type="ChEBI" id="CHEBI:58349"/>
        <dbReference type="ChEBI" id="CHEBI:78600"/>
    </reaction>
</comment>
<comment type="catalytic activity">
    <reaction evidence="7">
        <text>17beta-estradiol + NADP(+) = estrone + NADPH + H(+)</text>
        <dbReference type="Rhea" id="RHEA:24616"/>
        <dbReference type="ChEBI" id="CHEBI:15378"/>
        <dbReference type="ChEBI" id="CHEBI:16469"/>
        <dbReference type="ChEBI" id="CHEBI:17263"/>
        <dbReference type="ChEBI" id="CHEBI:57783"/>
        <dbReference type="ChEBI" id="CHEBI:58349"/>
        <dbReference type="EC" id="1.1.1.62"/>
    </reaction>
</comment>
<comment type="subcellular location">
    <subcellularLocation>
        <location evidence="7 8">Lipid droplet</location>
    </subcellularLocation>
    <subcellularLocation>
        <location evidence="4">Membrane</location>
        <topology evidence="11">Single-pass type II membrane protein</topology>
    </subcellularLocation>
    <text evidence="11">Surface of oil bodies. Exists at a monolayer lipid/water interface.</text>
</comment>
<comment type="tissue specificity">
    <text evidence="7 8">Expressed in seeds (at protein level) (PubMed:15331088, PubMed:9816677). Not expressed in stem, leaf or root (at protein level) (PubMed:9816677).</text>
</comment>
<comment type="developmental stage">
    <text evidence="7 8">Expressed during seed maturation (PubMed:15331088, PubMed:9816677). Appears in maturing seeds approximately 3 weeks after flowering and thereafter the level is maintained at a steady level till the late stage of seed maturation (at protein level). Detected in maturing seeds 2-3 weeks after flowering, progressively increasing to the maximal level in the following 2 weeks, and diminishing thereafter to a relatively low level at the late stage of seed maturation (PubMed:15331088).</text>
</comment>
<comment type="domain">
    <text evidence="3">The proline-knob motif may be involved in the targeting to oil bodies.</text>
</comment>
<comment type="similarity">
    <text evidence="11">Belongs to the short-chain dehydrogenases/reductases (SDR) family.</text>
</comment>